<protein>
    <recommendedName>
        <fullName>Small, acid-soluble spore protein gamma-type</fullName>
        <shortName>SASP</shortName>
    </recommendedName>
</protein>
<sequence>MNTKNFTPQESRTNAQQVRQQNQQSAQGTSSGFATEFASETNAQQVRQQNQQSAQANRMSGATAGGFNTEFASETNVQQVRQQNQQSEAKKRNNQQ</sequence>
<feature type="chain" id="PRO_0000196327" description="Small, acid-soluble spore protein gamma-type">
    <location>
        <begin position="1"/>
        <end position="96"/>
    </location>
</feature>
<feature type="repeat">
    <location>
        <begin position="28"/>
        <end position="52"/>
    </location>
</feature>
<feature type="repeat">
    <location>
        <begin position="61"/>
        <end position="87"/>
    </location>
</feature>
<feature type="region of interest" description="Disordered" evidence="1">
    <location>
        <begin position="1"/>
        <end position="96"/>
    </location>
</feature>
<feature type="compositionally biased region" description="Polar residues" evidence="1">
    <location>
        <begin position="1"/>
        <end position="15"/>
    </location>
</feature>
<feature type="compositionally biased region" description="Low complexity" evidence="1">
    <location>
        <begin position="16"/>
        <end position="27"/>
    </location>
</feature>
<feature type="compositionally biased region" description="Polar residues" evidence="1">
    <location>
        <begin position="28"/>
        <end position="41"/>
    </location>
</feature>
<feature type="compositionally biased region" description="Low complexity" evidence="1">
    <location>
        <begin position="42"/>
        <end position="57"/>
    </location>
</feature>
<feature type="compositionally biased region" description="Low complexity" evidence="1">
    <location>
        <begin position="76"/>
        <end position="86"/>
    </location>
</feature>
<feature type="site" description="Cleavage; by spore protease">
    <location>
        <begin position="36"/>
        <end position="37"/>
    </location>
</feature>
<feature type="site" description="Cleavage; by spore protease">
    <location>
        <begin position="70"/>
        <end position="71"/>
    </location>
</feature>
<evidence type="ECO:0000256" key="1">
    <source>
        <dbReference type="SAM" id="MobiDB-lite"/>
    </source>
</evidence>
<evidence type="ECO:0000305" key="2"/>
<dbReference type="EMBL" id="M16815">
    <property type="protein sequence ID" value="AAA23004.1"/>
    <property type="molecule type" value="Genomic_DNA"/>
</dbReference>
<dbReference type="STRING" id="1341151.GCA_000421885_01180"/>
<dbReference type="GO" id="GO:0030435">
    <property type="term" value="P:sporulation resulting in formation of a cellular spore"/>
    <property type="evidence" value="ECO:0007669"/>
    <property type="project" value="UniProtKB-KW"/>
</dbReference>
<dbReference type="InterPro" id="IPR006341">
    <property type="entry name" value="Spore_gamma"/>
</dbReference>
<dbReference type="NCBIfam" id="TIGR01442">
    <property type="entry name" value="SASP_gamma"/>
    <property type="match status" value="1"/>
</dbReference>
<dbReference type="Pfam" id="PF04259">
    <property type="entry name" value="SASP_gamma"/>
    <property type="match status" value="1"/>
</dbReference>
<proteinExistence type="inferred from homology"/>
<name>SASG_LACSH</name>
<reference key="1">
    <citation type="journal article" date="1987" name="J. Bacteriol.">
        <title>Cloning and nucleotide sequencing of genes for a second type of small, acid-soluble spore proteins of Bacillus cereus, Bacillus stearothermophilus, and 'Thermoactinomyces thalpophilus'.</title>
        <authorList>
            <person name="Sun D."/>
            <person name="Setlow P."/>
        </authorList>
    </citation>
    <scope>NUCLEOTIDE SEQUENCE [GENOMIC DNA]</scope>
    <source>
        <strain>HA-01</strain>
    </source>
</reference>
<accession>P07786</accession>
<keyword id="KW-0677">Repeat</keyword>
<keyword id="KW-0749">Sporulation</keyword>
<comment type="function">
    <text>SASP are proteins degraded in the first minutes of spore germination and provide amino acids for both new protein synthesis and metabolism. These proteins may be involved in dormant spore's high resistance to UV light.</text>
</comment>
<comment type="similarity">
    <text evidence="2">Belongs to the gamma-type SASP family.</text>
</comment>
<organism>
    <name type="scientific">Laceyella sacchari</name>
    <name type="common">Thermoactinomyces thalpophilus</name>
    <dbReference type="NCBI Taxonomy" id="37482"/>
    <lineage>
        <taxon>Bacteria</taxon>
        <taxon>Bacillati</taxon>
        <taxon>Bacillota</taxon>
        <taxon>Bacilli</taxon>
        <taxon>Bacillales</taxon>
        <taxon>Thermoactinomycetaceae</taxon>
        <taxon>Laceyella</taxon>
    </lineage>
</organism>